<comment type="function">
    <text evidence="1 2">Involved in the regulation of several genes of the hrp-hrc-hpa cluster, which encodes a type III secretion system (T3SS) (PubMed:21615204). Upregulates the expression of hpa2, hpa1 and hpaB and partially controls the expression of hrcC and hrcT (PubMed:21615204). Controls the secretion of the T3SS TAL effector AvrXa27 (PubMed:21615204). Also regulates the expression of several HrpX-regulated protein (Xrp) genes (PubMed:24675748). Has no influence on hrpG or hrpX expression (PubMed:21615204).</text>
</comment>
<comment type="induction">
    <text evidence="1">Expression is controlled by the hrpD operon promoter phrpD51 (PubMed:21615204). Positively regulated by HrpX (PubMed:21615204).</text>
</comment>
<comment type="disruption phenotype">
    <text evidence="1 2">Expression of hpa2, hpa1 and hpaB is undetectable in the mutant, and the expression levels of hrcC and hrcT are reduced (PubMed:21615204). The mutant is deficient in secretion of Hpa2, Hpa1 and HpaB-dependent T3SS effectors, such as the TAL effector AvrXa27 (PubMed:21615204). Mutation also affects expression of several Xrp-coding genes (PubMed:24675748).</text>
</comment>
<organism>
    <name type="scientific">Xanthomonas oryzae pv. oryzicola</name>
    <dbReference type="NCBI Taxonomy" id="129394"/>
    <lineage>
        <taxon>Bacteria</taxon>
        <taxon>Pseudomonadati</taxon>
        <taxon>Pseudomonadota</taxon>
        <taxon>Gammaproteobacteria</taxon>
        <taxon>Lysobacterales</taxon>
        <taxon>Lysobacteraceae</taxon>
        <taxon>Xanthomonas</taxon>
    </lineage>
</organism>
<name>HRPD6_XANOQ</name>
<gene>
    <name evidence="3" type="primary">hrpD6</name>
    <name evidence="7" type="ORF">ACU17_20810</name>
</gene>
<feature type="chain" id="PRO_0000459053" description="Regulatory protein HrpD6">
    <location>
        <begin position="1"/>
        <end position="80"/>
    </location>
</feature>
<dbReference type="EMBL" id="AY875714">
    <property type="protein sequence ID" value="ABH07396.1"/>
    <property type="molecule type" value="Genomic_DNA"/>
</dbReference>
<dbReference type="EMBL" id="CP011959">
    <property type="protein sequence ID" value="AKO10070.1"/>
    <property type="molecule type" value="Genomic_DNA"/>
</dbReference>
<dbReference type="RefSeq" id="WP_014505157.1">
    <property type="nucleotide sequence ID" value="NZ_MVFU01000052.1"/>
</dbReference>
<dbReference type="SMR" id="Q0VHC6"/>
<dbReference type="KEGG" id="xoz:BE73_01220"/>
<dbReference type="PATRIC" id="fig|129394.36.peg.248"/>
<dbReference type="HOGENOM" id="CLU_2588868_0_0_6"/>
<dbReference type="InterPro" id="IPR048129">
    <property type="entry name" value="HrpD6-like"/>
</dbReference>
<dbReference type="NCBIfam" id="NF041505">
    <property type="entry name" value="HrpD6"/>
    <property type="match status" value="1"/>
</dbReference>
<evidence type="ECO:0000269" key="1">
    <source>
    </source>
</evidence>
<evidence type="ECO:0000269" key="2">
    <source>
    </source>
</evidence>
<evidence type="ECO:0000303" key="3">
    <source>
    </source>
</evidence>
<evidence type="ECO:0000303" key="4">
    <source>
    </source>
</evidence>
<evidence type="ECO:0000303" key="5">
    <source>
    </source>
</evidence>
<evidence type="ECO:0000305" key="6"/>
<evidence type="ECO:0000312" key="7">
    <source>
        <dbReference type="EMBL" id="AKO10070.1"/>
    </source>
</evidence>
<proteinExistence type="evidence at transcript level"/>
<accession>Q0VHC6</accession>
<sequence length="80" mass="8656">MFDAMTDAVTQDMSKILQTKAADLSGERLRNVEAALDATAQQIRGHWSAASDQAARSDFSVLHDGITAARNIVVHIASMR</sequence>
<protein>
    <recommendedName>
        <fullName evidence="6">Regulatory protein HrpD6</fullName>
    </recommendedName>
    <alternativeName>
        <fullName evidence="5">Hrp regulator HrpD6</fullName>
    </alternativeName>
    <alternativeName>
        <fullName evidence="4">Hrp regulatory factor HrpD6</fullName>
    </alternativeName>
</protein>
<reference key="1">
    <citation type="journal article" date="2006" name="Appl. Environ. Microbiol.">
        <title>Elucidation of the hrp clusters of Xanthomonas oryzae pv. oryzicola that control the hypersensitive response in nonhost tobacco and pathogenicity in susceptible host rice.</title>
        <authorList>
            <person name="Zou L.F."/>
            <person name="Wang X.P."/>
            <person name="Xiang Y."/>
            <person name="Zhang B."/>
            <person name="Li Y.R."/>
            <person name="Xiao Y.L."/>
            <person name="Wang J.S."/>
            <person name="Walmsley A.R."/>
            <person name="Chen G.Y."/>
        </authorList>
    </citation>
    <scope>NUCLEOTIDE SEQUENCE [GENOMIC DNA]</scope>
    <source>
        <strain>RS105</strain>
    </source>
</reference>
<reference key="2">
    <citation type="journal article" date="2015" name="Front. Plant Sci.">
        <title>TAL effectors and activation of predicted host targets distinguish Asian from African strains of the rice pathogen Xanthomonas oryzae pv. oryzicola while strict conservation suggests universal importance of five TAL effectors.</title>
        <authorList>
            <person name="Wilkins K.E."/>
            <person name="Booher N.J."/>
            <person name="Wang L."/>
            <person name="Bogdanove A.J."/>
        </authorList>
    </citation>
    <scope>NUCLEOTIDE SEQUENCE [LARGE SCALE GENOMIC DNA]</scope>
    <source>
        <strain>CFBP7341</strain>
    </source>
</reference>
<reference key="3">
    <citation type="journal article" date="2011" name="Mol. Plant Microbe Interact.">
        <title>A novel regulatory role of HrpD6 in regulating hrp-hrc-hpa genes in Xanthomonas oryzae pv. oryzicola.</title>
        <authorList>
            <person name="Li Y.R."/>
            <person name="Zou H.S."/>
            <person name="Che Y.Z."/>
            <person name="Cui Y.P."/>
            <person name="Guo W."/>
            <person name="Zou L.F."/>
            <person name="Chatterjee S."/>
            <person name="Biddle E.M."/>
            <person name="Yang C.H."/>
            <person name="Chen G.Y."/>
        </authorList>
    </citation>
    <scope>FUNCTION</scope>
    <scope>INDUCTION</scope>
    <scope>DISRUPTION PHENOTYPE</scope>
    <source>
        <strain>RS105</strain>
    </source>
</reference>
<reference key="4">
    <citation type="journal article" date="2014" name="PLoS ONE">
        <title>Identification of 17 HrpX-regulated proteins including two novel type III effectors, XOC_3956 and XOC_1550, in Xanthomonas oryzae pv. oryzicola.</title>
        <authorList>
            <person name="Xue X.B."/>
            <person name="Zou L.F."/>
            <person name="Ma W.X."/>
            <person name="Liu Z.Y."/>
            <person name="Chen G.Y."/>
        </authorList>
    </citation>
    <scope>FUNCTION</scope>
    <scope>DISRUPTION PHENOTYPE</scope>
    <source>
        <strain>RS105</strain>
    </source>
</reference>